<name>VHED_BPR03</name>
<organism>
    <name type="scientific">Enterobacteria phage RB3</name>
    <name type="common">Bacteriophage RB3</name>
    <dbReference type="NCBI Taxonomy" id="31533"/>
    <lineage>
        <taxon>Viruses</taxon>
        <taxon>Duplodnaviria</taxon>
        <taxon>Heunggongvirae</taxon>
        <taxon>Uroviricota</taxon>
        <taxon>Caudoviricetes</taxon>
        <taxon>Straboviridae</taxon>
        <taxon>Tevenvirinae</taxon>
        <taxon>Tequatrovirus</taxon>
        <taxon>Tequatrovirus RB3</taxon>
    </lineage>
</organism>
<organismHost>
    <name type="scientific">Escherichia coli</name>
    <dbReference type="NCBI Taxonomy" id="562"/>
</organismHost>
<sequence>MFKRKSTAELAAQMAKLNGNKGFSSEDKGEWKLKLDNAGNGQAVI</sequence>
<dbReference type="EMBL" id="AF033323">
    <property type="protein sequence ID" value="AAB87488.1"/>
    <property type="molecule type" value="Genomic_DNA"/>
</dbReference>
<dbReference type="SMR" id="O21950"/>
<dbReference type="GO" id="GO:0003677">
    <property type="term" value="F:DNA binding"/>
    <property type="evidence" value="ECO:0007669"/>
    <property type="project" value="UniProtKB-KW"/>
</dbReference>
<dbReference type="GO" id="GO:0008270">
    <property type="term" value="F:zinc ion binding"/>
    <property type="evidence" value="ECO:0007669"/>
    <property type="project" value="UniProtKB-KW"/>
</dbReference>
<dbReference type="GO" id="GO:0006310">
    <property type="term" value="P:DNA recombination"/>
    <property type="evidence" value="ECO:0007669"/>
    <property type="project" value="UniProtKB-KW"/>
</dbReference>
<dbReference type="GO" id="GO:0006281">
    <property type="term" value="P:DNA repair"/>
    <property type="evidence" value="ECO:0007669"/>
    <property type="project" value="UniProtKB-KW"/>
</dbReference>
<dbReference type="GO" id="GO:0006260">
    <property type="term" value="P:DNA replication"/>
    <property type="evidence" value="ECO:0007669"/>
    <property type="project" value="UniProtKB-KW"/>
</dbReference>
<protein>
    <recommendedName>
        <fullName>Single-stranded DNA-binding protein</fullName>
    </recommendedName>
    <alternativeName>
        <fullName>Gp32</fullName>
    </alternativeName>
    <alternativeName>
        <fullName>Helix-destabilizing protein</fullName>
    </alternativeName>
</protein>
<keyword id="KW-0227">DNA damage</keyword>
<keyword id="KW-0233">DNA recombination</keyword>
<keyword id="KW-0234">DNA repair</keyword>
<keyword id="KW-0235">DNA replication</keyword>
<keyword id="KW-0238">DNA-binding</keyword>
<keyword id="KW-0479">Metal-binding</keyword>
<keyword id="KW-0862">Zinc</keyword>
<keyword id="KW-0863">Zinc-finger</keyword>
<proteinExistence type="inferred from homology"/>
<reference key="1">
    <citation type="submission" date="1997-11" db="EMBL/GenBank/DDBJ databases">
        <authorList>
            <person name="Theimer C.A."/>
            <person name="Krisch H.M."/>
            <person name="Giedroc D.P."/>
        </authorList>
    </citation>
    <scope>NUCLEOTIDE SEQUENCE [GENOMIC DNA]</scope>
</reference>
<gene>
    <name type="primary">32</name>
    <name type="synonym">ssb</name>
</gene>
<feature type="chain" id="PRO_0000165053" description="Single-stranded DNA-binding protein">
    <location>
        <begin position="1"/>
        <end position="45" status="greater than"/>
    </location>
</feature>
<feature type="non-terminal residue">
    <location>
        <position position="45"/>
    </location>
</feature>
<accession>O21950</accession>
<evidence type="ECO:0000250" key="1"/>
<comment type="function">
    <text>Binds preferentially to single-stranded DNA and therefore, destabilizes double-stranded DNA. It is involved in DNA replication, repair and recombination. Binds ss-DNA as the replication fork advances and stimulates the replisome processivity and accuracy.</text>
</comment>
<comment type="subunit">
    <text evidence="1">Homodimer in the absence of DNA, monomer when binding DNA.</text>
</comment>
<comment type="miscellaneous">
    <text evidence="1">Interacts with the polymerase and the uvsX and uvsY proteins.</text>
</comment>